<sequence>MAIVKCKPTSPGRRHVVKVVNPELHKGKPYAPLLEKLSKSGGRNNNGRITTRHIGGGHKQHYRLVDFKRNKDGIPAVVERLEYDPNRSANIALVLYKDGERRYILAPKGLKAGDQIQSGVDAAIKAGNTLPMRNIPVGSTVHNVEMKPGKGGQLARSAGAYVQIVARDGSYVTLRLRSGEMRKVQADCRATLGEVGNAEHMLRVLGKAGASRWRGIRPTVRGTAMNPVDHPHGGGEGRNFGKHPVTPWGVQTKGKKTRSNKRTDKFIVRRRSKK</sequence>
<proteinExistence type="inferred from homology"/>
<dbReference type="EMBL" id="CP000720">
    <property type="protein sequence ID" value="ABS46092.1"/>
    <property type="molecule type" value="Genomic_DNA"/>
</dbReference>
<dbReference type="RefSeq" id="WP_002213425.1">
    <property type="nucleotide sequence ID" value="NC_009708.1"/>
</dbReference>
<dbReference type="SMR" id="A7FNN2"/>
<dbReference type="GeneID" id="97454234"/>
<dbReference type="KEGG" id="ypi:YpsIP31758_3912"/>
<dbReference type="HOGENOM" id="CLU_036235_2_1_6"/>
<dbReference type="Proteomes" id="UP000002412">
    <property type="component" value="Chromosome"/>
</dbReference>
<dbReference type="GO" id="GO:0015934">
    <property type="term" value="C:large ribosomal subunit"/>
    <property type="evidence" value="ECO:0007669"/>
    <property type="project" value="InterPro"/>
</dbReference>
<dbReference type="GO" id="GO:0019843">
    <property type="term" value="F:rRNA binding"/>
    <property type="evidence" value="ECO:0007669"/>
    <property type="project" value="UniProtKB-UniRule"/>
</dbReference>
<dbReference type="GO" id="GO:0003735">
    <property type="term" value="F:structural constituent of ribosome"/>
    <property type="evidence" value="ECO:0007669"/>
    <property type="project" value="InterPro"/>
</dbReference>
<dbReference type="GO" id="GO:0016740">
    <property type="term" value="F:transferase activity"/>
    <property type="evidence" value="ECO:0007669"/>
    <property type="project" value="InterPro"/>
</dbReference>
<dbReference type="GO" id="GO:0002181">
    <property type="term" value="P:cytoplasmic translation"/>
    <property type="evidence" value="ECO:0007669"/>
    <property type="project" value="TreeGrafter"/>
</dbReference>
<dbReference type="FunFam" id="2.30.30.30:FF:000001">
    <property type="entry name" value="50S ribosomal protein L2"/>
    <property type="match status" value="1"/>
</dbReference>
<dbReference type="FunFam" id="2.40.50.140:FF:000003">
    <property type="entry name" value="50S ribosomal protein L2"/>
    <property type="match status" value="1"/>
</dbReference>
<dbReference type="FunFam" id="4.10.950.10:FF:000001">
    <property type="entry name" value="50S ribosomal protein L2"/>
    <property type="match status" value="1"/>
</dbReference>
<dbReference type="Gene3D" id="2.30.30.30">
    <property type="match status" value="1"/>
</dbReference>
<dbReference type="Gene3D" id="2.40.50.140">
    <property type="entry name" value="Nucleic acid-binding proteins"/>
    <property type="match status" value="1"/>
</dbReference>
<dbReference type="Gene3D" id="4.10.950.10">
    <property type="entry name" value="Ribosomal protein L2, domain 3"/>
    <property type="match status" value="1"/>
</dbReference>
<dbReference type="HAMAP" id="MF_01320_B">
    <property type="entry name" value="Ribosomal_uL2_B"/>
    <property type="match status" value="1"/>
</dbReference>
<dbReference type="InterPro" id="IPR012340">
    <property type="entry name" value="NA-bd_OB-fold"/>
</dbReference>
<dbReference type="InterPro" id="IPR014722">
    <property type="entry name" value="Rib_uL2_dom2"/>
</dbReference>
<dbReference type="InterPro" id="IPR002171">
    <property type="entry name" value="Ribosomal_uL2"/>
</dbReference>
<dbReference type="InterPro" id="IPR005880">
    <property type="entry name" value="Ribosomal_uL2_bac/org-type"/>
</dbReference>
<dbReference type="InterPro" id="IPR022669">
    <property type="entry name" value="Ribosomal_uL2_C"/>
</dbReference>
<dbReference type="InterPro" id="IPR022671">
    <property type="entry name" value="Ribosomal_uL2_CS"/>
</dbReference>
<dbReference type="InterPro" id="IPR014726">
    <property type="entry name" value="Ribosomal_uL2_dom3"/>
</dbReference>
<dbReference type="InterPro" id="IPR022666">
    <property type="entry name" value="Ribosomal_uL2_RNA-bd_dom"/>
</dbReference>
<dbReference type="InterPro" id="IPR008991">
    <property type="entry name" value="Translation_prot_SH3-like_sf"/>
</dbReference>
<dbReference type="NCBIfam" id="TIGR01171">
    <property type="entry name" value="rplB_bact"/>
    <property type="match status" value="1"/>
</dbReference>
<dbReference type="PANTHER" id="PTHR13691:SF5">
    <property type="entry name" value="LARGE RIBOSOMAL SUBUNIT PROTEIN UL2M"/>
    <property type="match status" value="1"/>
</dbReference>
<dbReference type="PANTHER" id="PTHR13691">
    <property type="entry name" value="RIBOSOMAL PROTEIN L2"/>
    <property type="match status" value="1"/>
</dbReference>
<dbReference type="Pfam" id="PF00181">
    <property type="entry name" value="Ribosomal_L2"/>
    <property type="match status" value="1"/>
</dbReference>
<dbReference type="Pfam" id="PF03947">
    <property type="entry name" value="Ribosomal_L2_C"/>
    <property type="match status" value="1"/>
</dbReference>
<dbReference type="PIRSF" id="PIRSF002158">
    <property type="entry name" value="Ribosomal_L2"/>
    <property type="match status" value="1"/>
</dbReference>
<dbReference type="SMART" id="SM01383">
    <property type="entry name" value="Ribosomal_L2"/>
    <property type="match status" value="1"/>
</dbReference>
<dbReference type="SMART" id="SM01382">
    <property type="entry name" value="Ribosomal_L2_C"/>
    <property type="match status" value="1"/>
</dbReference>
<dbReference type="SUPFAM" id="SSF50249">
    <property type="entry name" value="Nucleic acid-binding proteins"/>
    <property type="match status" value="1"/>
</dbReference>
<dbReference type="SUPFAM" id="SSF50104">
    <property type="entry name" value="Translation proteins SH3-like domain"/>
    <property type="match status" value="1"/>
</dbReference>
<dbReference type="PROSITE" id="PS00467">
    <property type="entry name" value="RIBOSOMAL_L2"/>
    <property type="match status" value="1"/>
</dbReference>
<feature type="chain" id="PRO_1000067547" description="Large ribosomal subunit protein uL2">
    <location>
        <begin position="1"/>
        <end position="274"/>
    </location>
</feature>
<feature type="region of interest" description="Disordered" evidence="2">
    <location>
        <begin position="221"/>
        <end position="274"/>
    </location>
</feature>
<organism>
    <name type="scientific">Yersinia pseudotuberculosis serotype O:1b (strain IP 31758)</name>
    <dbReference type="NCBI Taxonomy" id="349747"/>
    <lineage>
        <taxon>Bacteria</taxon>
        <taxon>Pseudomonadati</taxon>
        <taxon>Pseudomonadota</taxon>
        <taxon>Gammaproteobacteria</taxon>
        <taxon>Enterobacterales</taxon>
        <taxon>Yersiniaceae</taxon>
        <taxon>Yersinia</taxon>
    </lineage>
</organism>
<evidence type="ECO:0000255" key="1">
    <source>
        <dbReference type="HAMAP-Rule" id="MF_01320"/>
    </source>
</evidence>
<evidence type="ECO:0000256" key="2">
    <source>
        <dbReference type="SAM" id="MobiDB-lite"/>
    </source>
</evidence>
<evidence type="ECO:0000305" key="3"/>
<keyword id="KW-0687">Ribonucleoprotein</keyword>
<keyword id="KW-0689">Ribosomal protein</keyword>
<keyword id="KW-0694">RNA-binding</keyword>
<keyword id="KW-0699">rRNA-binding</keyword>
<name>RL2_YERP3</name>
<comment type="function">
    <text evidence="1">One of the primary rRNA binding proteins. Required for association of the 30S and 50S subunits to form the 70S ribosome, for tRNA binding and peptide bond formation. It has been suggested to have peptidyltransferase activity; this is somewhat controversial. Makes several contacts with the 16S rRNA in the 70S ribosome.</text>
</comment>
<comment type="subunit">
    <text evidence="1">Part of the 50S ribosomal subunit. Forms a bridge to the 30S subunit in the 70S ribosome.</text>
</comment>
<comment type="similarity">
    <text evidence="1">Belongs to the universal ribosomal protein uL2 family.</text>
</comment>
<accession>A7FNN2</accession>
<protein>
    <recommendedName>
        <fullName evidence="1">Large ribosomal subunit protein uL2</fullName>
    </recommendedName>
    <alternativeName>
        <fullName evidence="3">50S ribosomal protein L2</fullName>
    </alternativeName>
</protein>
<gene>
    <name evidence="1" type="primary">rplB</name>
    <name type="ordered locus">YpsIP31758_3912</name>
</gene>
<reference key="1">
    <citation type="journal article" date="2007" name="PLoS Genet.">
        <title>The complete genome sequence of Yersinia pseudotuberculosis IP31758, the causative agent of Far East scarlet-like fever.</title>
        <authorList>
            <person name="Eppinger M."/>
            <person name="Rosovitz M.J."/>
            <person name="Fricke W.F."/>
            <person name="Rasko D.A."/>
            <person name="Kokorina G."/>
            <person name="Fayolle C."/>
            <person name="Lindler L.E."/>
            <person name="Carniel E."/>
            <person name="Ravel J."/>
        </authorList>
    </citation>
    <scope>NUCLEOTIDE SEQUENCE [LARGE SCALE GENOMIC DNA]</scope>
    <source>
        <strain>IP 31758</strain>
    </source>
</reference>